<proteinExistence type="inferred from homology"/>
<dbReference type="EMBL" id="AE017143">
    <property type="protein sequence ID" value="AAP96674.1"/>
    <property type="molecule type" value="Genomic_DNA"/>
</dbReference>
<dbReference type="RefSeq" id="WP_010945700.1">
    <property type="nucleotide sequence ID" value="NC_002940.2"/>
</dbReference>
<dbReference type="SMR" id="Q7VKF5"/>
<dbReference type="STRING" id="233412.HD_1954"/>
<dbReference type="GeneID" id="60733565"/>
<dbReference type="KEGG" id="hdu:HD_1954"/>
<dbReference type="eggNOG" id="COG0099">
    <property type="taxonomic scope" value="Bacteria"/>
</dbReference>
<dbReference type="HOGENOM" id="CLU_103849_1_2_6"/>
<dbReference type="OrthoDB" id="9803610at2"/>
<dbReference type="Proteomes" id="UP000001022">
    <property type="component" value="Chromosome"/>
</dbReference>
<dbReference type="GO" id="GO:0005829">
    <property type="term" value="C:cytosol"/>
    <property type="evidence" value="ECO:0007669"/>
    <property type="project" value="TreeGrafter"/>
</dbReference>
<dbReference type="GO" id="GO:0015935">
    <property type="term" value="C:small ribosomal subunit"/>
    <property type="evidence" value="ECO:0007669"/>
    <property type="project" value="TreeGrafter"/>
</dbReference>
<dbReference type="GO" id="GO:0019843">
    <property type="term" value="F:rRNA binding"/>
    <property type="evidence" value="ECO:0007669"/>
    <property type="project" value="UniProtKB-UniRule"/>
</dbReference>
<dbReference type="GO" id="GO:0003735">
    <property type="term" value="F:structural constituent of ribosome"/>
    <property type="evidence" value="ECO:0007669"/>
    <property type="project" value="InterPro"/>
</dbReference>
<dbReference type="GO" id="GO:0000049">
    <property type="term" value="F:tRNA binding"/>
    <property type="evidence" value="ECO:0007669"/>
    <property type="project" value="UniProtKB-UniRule"/>
</dbReference>
<dbReference type="GO" id="GO:0006412">
    <property type="term" value="P:translation"/>
    <property type="evidence" value="ECO:0007669"/>
    <property type="project" value="UniProtKB-UniRule"/>
</dbReference>
<dbReference type="FunFam" id="1.10.8.50:FF:000001">
    <property type="entry name" value="30S ribosomal protein S13"/>
    <property type="match status" value="1"/>
</dbReference>
<dbReference type="FunFam" id="4.10.910.10:FF:000001">
    <property type="entry name" value="30S ribosomal protein S13"/>
    <property type="match status" value="1"/>
</dbReference>
<dbReference type="Gene3D" id="1.10.8.50">
    <property type="match status" value="1"/>
</dbReference>
<dbReference type="Gene3D" id="4.10.910.10">
    <property type="entry name" value="30s ribosomal protein s13, domain 2"/>
    <property type="match status" value="1"/>
</dbReference>
<dbReference type="HAMAP" id="MF_01315">
    <property type="entry name" value="Ribosomal_uS13"/>
    <property type="match status" value="1"/>
</dbReference>
<dbReference type="InterPro" id="IPR027437">
    <property type="entry name" value="Rbsml_uS13_C"/>
</dbReference>
<dbReference type="InterPro" id="IPR001892">
    <property type="entry name" value="Ribosomal_uS13"/>
</dbReference>
<dbReference type="InterPro" id="IPR010979">
    <property type="entry name" value="Ribosomal_uS13-like_H2TH"/>
</dbReference>
<dbReference type="InterPro" id="IPR019980">
    <property type="entry name" value="Ribosomal_uS13_bac-type"/>
</dbReference>
<dbReference type="InterPro" id="IPR018269">
    <property type="entry name" value="Ribosomal_uS13_CS"/>
</dbReference>
<dbReference type="NCBIfam" id="TIGR03631">
    <property type="entry name" value="uS13_bact"/>
    <property type="match status" value="1"/>
</dbReference>
<dbReference type="PANTHER" id="PTHR10871">
    <property type="entry name" value="30S RIBOSOMAL PROTEIN S13/40S RIBOSOMAL PROTEIN S18"/>
    <property type="match status" value="1"/>
</dbReference>
<dbReference type="PANTHER" id="PTHR10871:SF1">
    <property type="entry name" value="SMALL RIBOSOMAL SUBUNIT PROTEIN US13M"/>
    <property type="match status" value="1"/>
</dbReference>
<dbReference type="Pfam" id="PF00416">
    <property type="entry name" value="Ribosomal_S13"/>
    <property type="match status" value="1"/>
</dbReference>
<dbReference type="PIRSF" id="PIRSF002134">
    <property type="entry name" value="Ribosomal_S13"/>
    <property type="match status" value="1"/>
</dbReference>
<dbReference type="SUPFAM" id="SSF46946">
    <property type="entry name" value="S13-like H2TH domain"/>
    <property type="match status" value="1"/>
</dbReference>
<dbReference type="PROSITE" id="PS00646">
    <property type="entry name" value="RIBOSOMAL_S13_1"/>
    <property type="match status" value="1"/>
</dbReference>
<dbReference type="PROSITE" id="PS50159">
    <property type="entry name" value="RIBOSOMAL_S13_2"/>
    <property type="match status" value="1"/>
</dbReference>
<evidence type="ECO:0000255" key="1">
    <source>
        <dbReference type="HAMAP-Rule" id="MF_01315"/>
    </source>
</evidence>
<evidence type="ECO:0000256" key="2">
    <source>
        <dbReference type="SAM" id="MobiDB-lite"/>
    </source>
</evidence>
<evidence type="ECO:0000305" key="3"/>
<accession>Q7VKF5</accession>
<keyword id="KW-1185">Reference proteome</keyword>
<keyword id="KW-0687">Ribonucleoprotein</keyword>
<keyword id="KW-0689">Ribosomal protein</keyword>
<keyword id="KW-0694">RNA-binding</keyword>
<keyword id="KW-0699">rRNA-binding</keyword>
<keyword id="KW-0820">tRNA-binding</keyword>
<organism>
    <name type="scientific">Haemophilus ducreyi (strain 35000HP / ATCC 700724)</name>
    <dbReference type="NCBI Taxonomy" id="233412"/>
    <lineage>
        <taxon>Bacteria</taxon>
        <taxon>Pseudomonadati</taxon>
        <taxon>Pseudomonadota</taxon>
        <taxon>Gammaproteobacteria</taxon>
        <taxon>Pasteurellales</taxon>
        <taxon>Pasteurellaceae</taxon>
        <taxon>Haemophilus</taxon>
    </lineage>
</organism>
<reference key="1">
    <citation type="submission" date="2003-06" db="EMBL/GenBank/DDBJ databases">
        <title>The complete genome sequence of Haemophilus ducreyi.</title>
        <authorList>
            <person name="Munson R.S. Jr."/>
            <person name="Ray W.C."/>
            <person name="Mahairas G."/>
            <person name="Sabo P."/>
            <person name="Mungur R."/>
            <person name="Johnson L."/>
            <person name="Nguyen D."/>
            <person name="Wang J."/>
            <person name="Forst C."/>
            <person name="Hood L."/>
        </authorList>
    </citation>
    <scope>NUCLEOTIDE SEQUENCE [LARGE SCALE GENOMIC DNA]</scope>
    <source>
        <strain>35000HP / ATCC 700724</strain>
    </source>
</reference>
<protein>
    <recommendedName>
        <fullName evidence="1">Small ribosomal subunit protein uS13</fullName>
    </recommendedName>
    <alternativeName>
        <fullName evidence="3">30S ribosomal protein S13</fullName>
    </alternativeName>
</protein>
<name>RS13_HAEDU</name>
<gene>
    <name evidence="1" type="primary">rpsM</name>
    <name type="ordered locus">HD_1954</name>
</gene>
<sequence length="118" mass="13329">MARIAGINIPDQKHTVIALTAIYGIGKTRAKAICVATGIAEDVKIRELSEEQIEKLREEVSKFTVEGDLRREVTLSIKRLLDLGCYRGLRHRRGLPVRGQRTKTNARTRKGPRKPIKK</sequence>
<feature type="chain" id="PRO_0000132094" description="Small ribosomal subunit protein uS13">
    <location>
        <begin position="1"/>
        <end position="118"/>
    </location>
</feature>
<feature type="region of interest" description="Disordered" evidence="2">
    <location>
        <begin position="94"/>
        <end position="118"/>
    </location>
</feature>
<comment type="function">
    <text evidence="1">Located at the top of the head of the 30S subunit, it contacts several helices of the 16S rRNA. In the 70S ribosome it contacts the 23S rRNA (bridge B1a) and protein L5 of the 50S subunit (bridge B1b), connecting the 2 subunits; these bridges are implicated in subunit movement. Contacts the tRNAs in the A and P-sites.</text>
</comment>
<comment type="subunit">
    <text evidence="1">Part of the 30S ribosomal subunit. Forms a loose heterodimer with protein S19. Forms two bridges to the 50S subunit in the 70S ribosome.</text>
</comment>
<comment type="similarity">
    <text evidence="1">Belongs to the universal ribosomal protein uS13 family.</text>
</comment>